<comment type="function">
    <text evidence="3">RNA-binding subunit of the trimeric nuclear exosome targeting (NEXT) complex, a complex that functions as an RNA exosome cofactor that directs a subset of non-coding short-lived RNAs for exosomal degradation. NEXT is involved in surveillance and turnover of aberrant transcripts and non-coding RNAs. Binds preferentially polyuridine sequences and associates with newly synthesized RNAs, including pre-mRNAs and short-lived exosome substrates such as promoter upstream transcripts (PROMPTs), enhancer RNAs (eRNAs), and 3'-extended products from small nuclear RNAs (snRNAs). Participates in several biological processes including DNA damage response (DDR) and stress response. During stress response, activation of the p38MAPK-MK2 pathway decreases RBM7-RNA-binding and subsequently the RNA exosome degradation activities, thereby modulating the turnover of non-coding transcriptome. Participates in DNA damage response (DDR), through its interaction with MEPCE and LARP7, the core subunits of 7SK snRNP complex, that release the positive transcription elongation factor b (P-TEFb) complex from the 7SK snRNP. In turn, activation of P-TEFb complex induces the transcription of P-TEFb-dependent DDR genes to promote cell viability.</text>
</comment>
<comment type="subunit">
    <text evidence="3">Component of the nuclear exosome targeting (NEXT) complex composed of MTREX, ZCCHC8, and RBM7 that directs a subset of non-coding short-lived RNAs for exosomal degradation. Interacts with ZCCHC8 and SF3B2/SAP145. Binds to MTREX through ZCCHC8. Interacts with YWHAE and YWHAZ; these interactions are stress-dependent and RBM7 phosphorylation dependent; release RNA from the NEXT complex and may affect RNA targeting to the nuclear RNA exosomome for degradation. Interacts with MEPCE and LARP7, the core subunits of 7SK snRNP; upon genotoxic stress this interaction is enhanced, triggering the release of inactive P-TEFb complex from the core and P-TEFb complex activation.</text>
</comment>
<comment type="subcellular location">
    <subcellularLocation>
        <location evidence="3">Nucleus</location>
        <location evidence="3">Nucleoplasm</location>
    </subcellularLocation>
    <subcellularLocation>
        <location evidence="2">Nucleus</location>
    </subcellularLocation>
    <text evidence="3">Excluded from the nucleolus.</text>
</comment>
<comment type="domain">
    <text evidence="3">The RRM domain mediates RNA binding; the RNA must have four nucleotides for efficient binding. Mediates the interaction of NEXT complex with promoter upstream transcripts (PROMPTs) and potentially aberrant forms of other non coding RNAs, such as snRNAs. The RRM domain exhibits specificity for polyuridine sequences.</text>
</comment>
<comment type="PTM">
    <text evidence="3">Phosphorylated at Ser-133 by MAPK14/p38-alpha-activated MAPKAPK2/MK2; this phosphorylation is stress-dependent; this phosphorylation decreases its RNA-binding capacity therefore affecting RNA nuclear exosome-mediated degradation. This phosphorylation mediates YWHAE and YWHAZ interactions.</text>
</comment>
<proteinExistence type="evidence at transcript level"/>
<protein>
    <recommendedName>
        <fullName evidence="3">RNA-binding protein 7</fullName>
    </recommendedName>
    <alternativeName>
        <fullName evidence="3">RNA-binding motif protein 7</fullName>
    </alternativeName>
</protein>
<feature type="initiator methionine" description="Removed" evidence="3">
    <location>
        <position position="1"/>
    </location>
</feature>
<feature type="chain" id="PRO_0000230990" description="RNA-binding protein 7" evidence="1">
    <location>
        <begin position="2"/>
        <end position="262"/>
    </location>
</feature>
<feature type="domain" description="RRM" evidence="4">
    <location>
        <begin position="10"/>
        <end position="87"/>
    </location>
</feature>
<feature type="region of interest" description="ZCCHC8 binding" evidence="3">
    <location>
        <begin position="25"/>
        <end position="35"/>
    </location>
</feature>
<feature type="region of interest" description="ZCCHC8 binding" evidence="3">
    <location>
        <begin position="59"/>
        <end position="76"/>
    </location>
</feature>
<feature type="region of interest" description="Disordered" evidence="5">
    <location>
        <begin position="95"/>
        <end position="121"/>
    </location>
</feature>
<feature type="region of interest" description="Disordered" evidence="5">
    <location>
        <begin position="159"/>
        <end position="212"/>
    </location>
</feature>
<feature type="region of interest" description="Disordered" evidence="5">
    <location>
        <begin position="242"/>
        <end position="262"/>
    </location>
</feature>
<feature type="compositionally biased region" description="Polar residues" evidence="5">
    <location>
        <begin position="165"/>
        <end position="194"/>
    </location>
</feature>
<feature type="compositionally biased region" description="Basic and acidic residues" evidence="5">
    <location>
        <begin position="242"/>
        <end position="253"/>
    </location>
</feature>
<feature type="modified residue" description="N-acetylglycine" evidence="3">
    <location>
        <position position="2"/>
    </location>
</feature>
<feature type="modified residue" description="Phosphoserine" evidence="2">
    <location>
        <position position="133"/>
    </location>
</feature>
<feature type="modified residue" description="Phosphoserine" evidence="2">
    <location>
        <position position="134"/>
    </location>
</feature>
<feature type="modified residue" description="Omega-N-methylarginine" evidence="3">
    <location>
        <position position="149"/>
    </location>
</feature>
<feature type="modified residue" description="Phosphoserine" evidence="3">
    <location>
        <position position="201"/>
    </location>
</feature>
<accession>Q3MHY8</accession>
<organism>
    <name type="scientific">Bos taurus</name>
    <name type="common">Bovine</name>
    <dbReference type="NCBI Taxonomy" id="9913"/>
    <lineage>
        <taxon>Eukaryota</taxon>
        <taxon>Metazoa</taxon>
        <taxon>Chordata</taxon>
        <taxon>Craniata</taxon>
        <taxon>Vertebrata</taxon>
        <taxon>Euteleostomi</taxon>
        <taxon>Mammalia</taxon>
        <taxon>Eutheria</taxon>
        <taxon>Laurasiatheria</taxon>
        <taxon>Artiodactyla</taxon>
        <taxon>Ruminantia</taxon>
        <taxon>Pecora</taxon>
        <taxon>Bovidae</taxon>
        <taxon>Bovinae</taxon>
        <taxon>Bos</taxon>
    </lineage>
</organism>
<gene>
    <name evidence="3" type="primary">RBM7</name>
</gene>
<evidence type="ECO:0000250" key="1"/>
<evidence type="ECO:0000250" key="2">
    <source>
        <dbReference type="UniProtKB" id="Q9CQT2"/>
    </source>
</evidence>
<evidence type="ECO:0000250" key="3">
    <source>
        <dbReference type="UniProtKB" id="Q9Y580"/>
    </source>
</evidence>
<evidence type="ECO:0000255" key="4">
    <source>
        <dbReference type="PROSITE-ProRule" id="PRU00176"/>
    </source>
</evidence>
<evidence type="ECO:0000256" key="5">
    <source>
        <dbReference type="SAM" id="MobiDB-lite"/>
    </source>
</evidence>
<sequence length="262" mass="29963">MGAAAAEADRTLFVGNLETKVTEELLFELFHQAGPVIKVKIPKDKDGKPKQFAFVNFKHEVSVPYAMNLLNGIKLFGRPIKIQFRAGSSHASQEVSLSYPQHHVGNSSPTSTSPSRTVDNMTPSAQTIQRSFSSSENFQRQAVMNNVLRQMSYGGKFGSPHLDQSGFSPSAQSHNHTFNQSSSSQWRQDTPSSQRKVRLNSHPYVMDRHYSREQRYSDLSDHHYRGNRDDFFYEDRNHDGWSHDYDNRRDSGRNGKWRSSRH</sequence>
<keyword id="KW-0007">Acetylation</keyword>
<keyword id="KW-0469">Meiosis</keyword>
<keyword id="KW-0488">Methylation</keyword>
<keyword id="KW-0539">Nucleus</keyword>
<keyword id="KW-0597">Phosphoprotein</keyword>
<keyword id="KW-1185">Reference proteome</keyword>
<keyword id="KW-0694">RNA-binding</keyword>
<name>RBM7_BOVIN</name>
<dbReference type="EMBL" id="BC104518">
    <property type="protein sequence ID" value="AAI04519.1"/>
    <property type="molecule type" value="mRNA"/>
</dbReference>
<dbReference type="RefSeq" id="NP_001029659.1">
    <property type="nucleotide sequence ID" value="NM_001034487.1"/>
</dbReference>
<dbReference type="SMR" id="Q3MHY8"/>
<dbReference type="FunCoup" id="Q3MHY8">
    <property type="interactions" value="1709"/>
</dbReference>
<dbReference type="STRING" id="9913.ENSBTAP00000010804"/>
<dbReference type="PaxDb" id="9913-ENSBTAP00000010804"/>
<dbReference type="Ensembl" id="ENSBTAT00000010804.4">
    <property type="protein sequence ID" value="ENSBTAP00000010804.3"/>
    <property type="gene ID" value="ENSBTAG00000008219.4"/>
</dbReference>
<dbReference type="GeneID" id="515307"/>
<dbReference type="KEGG" id="bta:515307"/>
<dbReference type="CTD" id="10179"/>
<dbReference type="VEuPathDB" id="HostDB:ENSBTAG00000008219"/>
<dbReference type="VGNC" id="VGNC:112649">
    <property type="gene designation" value="RBM7"/>
</dbReference>
<dbReference type="eggNOG" id="KOG4454">
    <property type="taxonomic scope" value="Eukaryota"/>
</dbReference>
<dbReference type="GeneTree" id="ENSGT00870000136493"/>
<dbReference type="HOGENOM" id="CLU_087967_0_0_1"/>
<dbReference type="InParanoid" id="Q3MHY8"/>
<dbReference type="OMA" id="MRIQFRS"/>
<dbReference type="OrthoDB" id="407442at2759"/>
<dbReference type="TreeFam" id="TF323596"/>
<dbReference type="Reactome" id="R-BTA-72163">
    <property type="pathway name" value="mRNA Splicing - Major Pathway"/>
</dbReference>
<dbReference type="Proteomes" id="UP000009136">
    <property type="component" value="Chromosome 15"/>
</dbReference>
<dbReference type="Bgee" id="ENSBTAG00000008219">
    <property type="expression patterns" value="Expressed in endometrium and 107 other cell types or tissues"/>
</dbReference>
<dbReference type="GO" id="GO:0005654">
    <property type="term" value="C:nucleoplasm"/>
    <property type="evidence" value="ECO:0000250"/>
    <property type="project" value="UniProtKB"/>
</dbReference>
<dbReference type="GO" id="GO:0005634">
    <property type="term" value="C:nucleus"/>
    <property type="evidence" value="ECO:0000250"/>
    <property type="project" value="UniProtKB"/>
</dbReference>
<dbReference type="GO" id="GO:0071889">
    <property type="term" value="F:14-3-3 protein binding"/>
    <property type="evidence" value="ECO:0000250"/>
    <property type="project" value="UniProtKB"/>
</dbReference>
<dbReference type="GO" id="GO:0003723">
    <property type="term" value="F:RNA binding"/>
    <property type="evidence" value="ECO:0000250"/>
    <property type="project" value="UniProtKB"/>
</dbReference>
<dbReference type="GO" id="GO:0003727">
    <property type="term" value="F:single-stranded RNA binding"/>
    <property type="evidence" value="ECO:0000318"/>
    <property type="project" value="GO_Central"/>
</dbReference>
<dbReference type="GO" id="GO:0051321">
    <property type="term" value="P:meiotic cell cycle"/>
    <property type="evidence" value="ECO:0007669"/>
    <property type="project" value="UniProtKB-KW"/>
</dbReference>
<dbReference type="GO" id="GO:0000381">
    <property type="term" value="P:regulation of alternative mRNA splicing, via spliceosome"/>
    <property type="evidence" value="ECO:0000318"/>
    <property type="project" value="GO_Central"/>
</dbReference>
<dbReference type="CDD" id="cd12592">
    <property type="entry name" value="RRM_RBM7"/>
    <property type="match status" value="1"/>
</dbReference>
<dbReference type="FunFam" id="3.30.70.330:FF:000261">
    <property type="entry name" value="RNA-binding motif protein 7"/>
    <property type="match status" value="1"/>
</dbReference>
<dbReference type="Gene3D" id="3.30.70.330">
    <property type="match status" value="1"/>
</dbReference>
<dbReference type="InterPro" id="IPR052285">
    <property type="entry name" value="NEXT_complex_subunit"/>
</dbReference>
<dbReference type="InterPro" id="IPR012677">
    <property type="entry name" value="Nucleotide-bd_a/b_plait_sf"/>
</dbReference>
<dbReference type="InterPro" id="IPR035979">
    <property type="entry name" value="RBD_domain_sf"/>
</dbReference>
<dbReference type="InterPro" id="IPR034500">
    <property type="entry name" value="RBM7_RRM"/>
</dbReference>
<dbReference type="InterPro" id="IPR000504">
    <property type="entry name" value="RRM_dom"/>
</dbReference>
<dbReference type="PANTHER" id="PTHR13798">
    <property type="entry name" value="RNA BINDING MOTIF RBM PROTEIN -RELATED"/>
    <property type="match status" value="1"/>
</dbReference>
<dbReference type="PANTHER" id="PTHR13798:SF4">
    <property type="entry name" value="RNA-BINDING PROTEIN 7"/>
    <property type="match status" value="1"/>
</dbReference>
<dbReference type="Pfam" id="PF00076">
    <property type="entry name" value="RRM_1"/>
    <property type="match status" value="1"/>
</dbReference>
<dbReference type="SMART" id="SM00360">
    <property type="entry name" value="RRM"/>
    <property type="match status" value="1"/>
</dbReference>
<dbReference type="SUPFAM" id="SSF54928">
    <property type="entry name" value="RNA-binding domain, RBD"/>
    <property type="match status" value="1"/>
</dbReference>
<dbReference type="PROSITE" id="PS50102">
    <property type="entry name" value="RRM"/>
    <property type="match status" value="1"/>
</dbReference>
<reference key="1">
    <citation type="submission" date="2005-09" db="EMBL/GenBank/DDBJ databases">
        <authorList>
            <consortium name="NIH - Mammalian Gene Collection (MGC) project"/>
        </authorList>
    </citation>
    <scope>NUCLEOTIDE SEQUENCE [LARGE SCALE MRNA]</scope>
    <source>
        <strain>Hereford</strain>
        <tissue>Ascending colon</tissue>
    </source>
</reference>